<sequence length="67" mass="7857">MSLFPVFVVFGLSFPPIFFELILSLAIFWLVRKLLAPTGIYDFVWHPALFNTALYCCLFYLISRMFV</sequence>
<dbReference type="EMBL" id="CP000653">
    <property type="protein sequence ID" value="ABP62336.1"/>
    <property type="molecule type" value="Genomic_DNA"/>
</dbReference>
<dbReference type="RefSeq" id="WP_015960659.1">
    <property type="nucleotide sequence ID" value="NC_009436.1"/>
</dbReference>
<dbReference type="STRING" id="399742.Ent638_3679"/>
<dbReference type="KEGG" id="ent:Ent638_3679"/>
<dbReference type="eggNOG" id="ENOG5032YJX">
    <property type="taxonomic scope" value="Bacteria"/>
</dbReference>
<dbReference type="HOGENOM" id="CLU_188292_0_0_6"/>
<dbReference type="OrthoDB" id="6080293at2"/>
<dbReference type="Proteomes" id="UP000000230">
    <property type="component" value="Chromosome"/>
</dbReference>
<dbReference type="GO" id="GO:0005886">
    <property type="term" value="C:plasma membrane"/>
    <property type="evidence" value="ECO:0007669"/>
    <property type="project" value="UniProtKB-SubCell"/>
</dbReference>
<dbReference type="HAMAP" id="MF_01546">
    <property type="entry name" value="AaeX"/>
    <property type="match status" value="1"/>
</dbReference>
<dbReference type="InterPro" id="IPR012451">
    <property type="entry name" value="DUF1656"/>
</dbReference>
<dbReference type="NCBIfam" id="NF008615">
    <property type="entry name" value="PRK11594.1"/>
    <property type="match status" value="1"/>
</dbReference>
<dbReference type="Pfam" id="PF07869">
    <property type="entry name" value="DUF1656"/>
    <property type="match status" value="1"/>
</dbReference>
<gene>
    <name evidence="1" type="primary">aaeX</name>
    <name type="ordered locus">Ent638_3679</name>
</gene>
<proteinExistence type="inferred from homology"/>
<organism>
    <name type="scientific">Enterobacter sp. (strain 638)</name>
    <dbReference type="NCBI Taxonomy" id="399742"/>
    <lineage>
        <taxon>Bacteria</taxon>
        <taxon>Pseudomonadati</taxon>
        <taxon>Pseudomonadota</taxon>
        <taxon>Gammaproteobacteria</taxon>
        <taxon>Enterobacterales</taxon>
        <taxon>Enterobacteriaceae</taxon>
        <taxon>Enterobacter</taxon>
    </lineage>
</organism>
<evidence type="ECO:0000255" key="1">
    <source>
        <dbReference type="HAMAP-Rule" id="MF_01546"/>
    </source>
</evidence>
<comment type="subcellular location">
    <subcellularLocation>
        <location evidence="1">Cell membrane</location>
        <topology evidence="1">Multi-pass membrane protein</topology>
    </subcellularLocation>
</comment>
<comment type="similarity">
    <text evidence="1">Belongs to the AaeX family.</text>
</comment>
<reference key="1">
    <citation type="journal article" date="2010" name="PLoS Genet.">
        <title>Genome sequence of the plant growth promoting endophytic bacterium Enterobacter sp. 638.</title>
        <authorList>
            <person name="Taghavi S."/>
            <person name="van der Lelie D."/>
            <person name="Hoffman A."/>
            <person name="Zhang Y.B."/>
            <person name="Walla M.D."/>
            <person name="Vangronsveld J."/>
            <person name="Newman L."/>
            <person name="Monchy S."/>
        </authorList>
    </citation>
    <scope>NUCLEOTIDE SEQUENCE [LARGE SCALE GENOMIC DNA]</scope>
    <source>
        <strain>638</strain>
    </source>
</reference>
<name>AAEX_ENT38</name>
<protein>
    <recommendedName>
        <fullName evidence="1">Protein AaeX</fullName>
    </recommendedName>
</protein>
<accession>A4WF56</accession>
<keyword id="KW-1003">Cell membrane</keyword>
<keyword id="KW-0472">Membrane</keyword>
<keyword id="KW-0812">Transmembrane</keyword>
<keyword id="KW-1133">Transmembrane helix</keyword>
<feature type="chain" id="PRO_1000068810" description="Protein AaeX">
    <location>
        <begin position="1"/>
        <end position="67"/>
    </location>
</feature>
<feature type="transmembrane region" description="Helical" evidence="1">
    <location>
        <begin position="3"/>
        <end position="23"/>
    </location>
</feature>
<feature type="transmembrane region" description="Helical" evidence="1">
    <location>
        <begin position="43"/>
        <end position="63"/>
    </location>
</feature>